<comment type="function">
    <text evidence="1">Secreted metalloproteinase that allows assimilation of proteinaceous substrates. Shows high activities on basic nuclear substrates such as histone and protamine (By similarity).</text>
</comment>
<comment type="catalytic activity">
    <reaction>
        <text>Preferential cleavage of bonds with hydrophobic residues in P1'. Also 3-Asn-|-Gln-4 and 8-Gly-|-Ser-9 bonds in insulin B chain.</text>
        <dbReference type="EC" id="3.4.24.39"/>
    </reaction>
</comment>
<comment type="cofactor">
    <cofactor evidence="1">
        <name>Zn(2+)</name>
        <dbReference type="ChEBI" id="CHEBI:29105"/>
    </cofactor>
    <text evidence="1">Binds 1 zinc ion per subunit.</text>
</comment>
<comment type="subcellular location">
    <subcellularLocation>
        <location evidence="1">Secreted</location>
    </subcellularLocation>
</comment>
<comment type="similarity">
    <text evidence="4">Belongs to the peptidase M35 family.</text>
</comment>
<comment type="sequence caution" evidence="4">
    <conflict type="erroneous gene model prediction">
        <sequence resource="EMBL-CDS" id="EEH20103"/>
    </conflict>
</comment>
<evidence type="ECO:0000250" key="1"/>
<evidence type="ECO:0000255" key="2"/>
<evidence type="ECO:0000255" key="3">
    <source>
        <dbReference type="PROSITE-ProRule" id="PRU10095"/>
    </source>
</evidence>
<evidence type="ECO:0000305" key="4"/>
<reference key="1">
    <citation type="journal article" date="2011" name="PLoS Genet.">
        <title>Comparative genomic analysis of human fungal pathogens causing paracoccidioidomycosis.</title>
        <authorList>
            <person name="Desjardins C.A."/>
            <person name="Champion M.D."/>
            <person name="Holder J.W."/>
            <person name="Muszewska A."/>
            <person name="Goldberg J."/>
            <person name="Bailao A.M."/>
            <person name="Brigido M.M."/>
            <person name="Ferreira M.E."/>
            <person name="Garcia A.M."/>
            <person name="Grynberg M."/>
            <person name="Gujja S."/>
            <person name="Heiman D.I."/>
            <person name="Henn M.R."/>
            <person name="Kodira C.D."/>
            <person name="Leon-Narvaez H."/>
            <person name="Longo L.V.G."/>
            <person name="Ma L.-J."/>
            <person name="Malavazi I."/>
            <person name="Matsuo A.L."/>
            <person name="Morais F.V."/>
            <person name="Pereira M."/>
            <person name="Rodriguez-Brito S."/>
            <person name="Sakthikumar S."/>
            <person name="Salem-Izacc S.M."/>
            <person name="Sykes S.M."/>
            <person name="Teixeira M.M."/>
            <person name="Vallejo M.C."/>
            <person name="Walter M.E."/>
            <person name="Yandava C."/>
            <person name="Young S."/>
            <person name="Zeng Q."/>
            <person name="Zucker J."/>
            <person name="Felipe M.S."/>
            <person name="Goldman G.H."/>
            <person name="Haas B.J."/>
            <person name="McEwen J.G."/>
            <person name="Nino-Vega G."/>
            <person name="Puccia R."/>
            <person name="San-Blas G."/>
            <person name="Soares C.M."/>
            <person name="Birren B.W."/>
            <person name="Cuomo C.A."/>
        </authorList>
    </citation>
    <scope>NUCLEOTIDE SEQUENCE [LARGE SCALE GENOMIC DNA]</scope>
    <source>
        <strain>Pb03</strain>
    </source>
</reference>
<feature type="signal peptide" evidence="2">
    <location>
        <begin position="1"/>
        <end position="19"/>
    </location>
</feature>
<feature type="propeptide" id="PRO_0000407110" evidence="1">
    <location>
        <begin position="20"/>
        <end position="182"/>
    </location>
</feature>
<feature type="chain" id="PRO_0000407111" description="Neutral protease 2 homolog PABG_02362">
    <location>
        <begin position="183"/>
        <end position="358"/>
    </location>
</feature>
<feature type="active site" evidence="3">
    <location>
        <position position="310"/>
    </location>
</feature>
<feature type="binding site" evidence="3">
    <location>
        <position position="309"/>
    </location>
    <ligand>
        <name>Zn(2+)</name>
        <dbReference type="ChEBI" id="CHEBI:29105"/>
        <note>catalytic</note>
    </ligand>
</feature>
<feature type="binding site" evidence="3">
    <location>
        <position position="313"/>
    </location>
    <ligand>
        <name>Zn(2+)</name>
        <dbReference type="ChEBI" id="CHEBI:29105"/>
        <note>catalytic</note>
    </ligand>
</feature>
<feature type="binding site" evidence="3">
    <location>
        <position position="324"/>
    </location>
    <ligand>
        <name>Zn(2+)</name>
        <dbReference type="ChEBI" id="CHEBI:29105"/>
        <note>catalytic</note>
    </ligand>
</feature>
<feature type="glycosylation site" description="N-linked (GlcNAc...) asparagine" evidence="2">
    <location>
        <position position="249"/>
    </location>
</feature>
<feature type="disulfide bond" evidence="1">
    <location>
        <begin position="188"/>
        <end position="259"/>
    </location>
</feature>
<feature type="disulfide bond" evidence="1">
    <location>
        <begin position="266"/>
        <end position="284"/>
    </location>
</feature>
<organism>
    <name type="scientific">Paracoccidioides brasiliensis (strain Pb03)</name>
    <dbReference type="NCBI Taxonomy" id="482561"/>
    <lineage>
        <taxon>Eukaryota</taxon>
        <taxon>Fungi</taxon>
        <taxon>Dikarya</taxon>
        <taxon>Ascomycota</taxon>
        <taxon>Pezizomycotina</taxon>
        <taxon>Eurotiomycetes</taxon>
        <taxon>Eurotiomycetidae</taxon>
        <taxon>Onygenales</taxon>
        <taxon>Ajellomycetaceae</taxon>
        <taxon>Paracoccidioides</taxon>
    </lineage>
</organism>
<name>NPIIA_PARBP</name>
<keyword id="KW-0165">Cleavage on pair of basic residues</keyword>
<keyword id="KW-1015">Disulfide bond</keyword>
<keyword id="KW-0325">Glycoprotein</keyword>
<keyword id="KW-0378">Hydrolase</keyword>
<keyword id="KW-0479">Metal-binding</keyword>
<keyword id="KW-0482">Metalloprotease</keyword>
<keyword id="KW-0645">Protease</keyword>
<keyword id="KW-0964">Secreted</keyword>
<keyword id="KW-0732">Signal</keyword>
<keyword id="KW-0862">Zinc</keyword>
<keyword id="KW-0865">Zymogen</keyword>
<proteinExistence type="inferred from homology"/>
<sequence length="358" mass="38451">MRRVSGILAVAAFTISAFAGVIQPVAKDARDSAELDVKLTQVDGTVIKAVVTNNGDKDLNILNLNFFRDTAPVKKVSIYSQGVEVPFGGIRVRHKTSGLSSDVITYLAPGESFEDEFDVAITSDLSQGGPVVLQTQGYVPTTDTGGKTLSGVVRYKSNKLEIDVDGTTAAKSFAAMNQFVKIAKLSSCEGSQGDDTRRALRDCASLSTLAAAQAWAGGPKMLEYFKANDDATRKLVADRFTAVALESSNLTGGSTTYYCRDPYNICTNNIIAYTIPAENLISNCPIYYTEFDNVNRKCHGQDRVTTSLHEFTHASSVFSPGTKDIAYGYNACILLSTRDALNNADTFALFAQSINAGC</sequence>
<gene>
    <name type="ORF">PABG_02362</name>
</gene>
<protein>
    <recommendedName>
        <fullName>Neutral protease 2 homolog PABG_02362</fullName>
        <ecNumber>3.4.24.39</ecNumber>
    </recommendedName>
    <alternativeName>
        <fullName>Deuterolysin PABG_02362</fullName>
    </alternativeName>
</protein>
<accession>C0S3U8</accession>
<dbReference type="EC" id="3.4.24.39"/>
<dbReference type="EMBL" id="KN305533">
    <property type="protein sequence ID" value="EEH20103.2"/>
    <property type="status" value="ALT_SEQ"/>
    <property type="molecule type" value="Genomic_DNA"/>
</dbReference>
<dbReference type="SMR" id="C0S3U8"/>
<dbReference type="MEROPS" id="M35.002"/>
<dbReference type="HOGENOM" id="CLU_039313_1_1_1"/>
<dbReference type="OrthoDB" id="33573at33183"/>
<dbReference type="GO" id="GO:0005576">
    <property type="term" value="C:extracellular region"/>
    <property type="evidence" value="ECO:0007669"/>
    <property type="project" value="UniProtKB-SubCell"/>
</dbReference>
<dbReference type="GO" id="GO:0046872">
    <property type="term" value="F:metal ion binding"/>
    <property type="evidence" value="ECO:0007669"/>
    <property type="project" value="UniProtKB-KW"/>
</dbReference>
<dbReference type="GO" id="GO:0004222">
    <property type="term" value="F:metalloendopeptidase activity"/>
    <property type="evidence" value="ECO:0007669"/>
    <property type="project" value="InterPro"/>
</dbReference>
<dbReference type="GO" id="GO:0006508">
    <property type="term" value="P:proteolysis"/>
    <property type="evidence" value="ECO:0007669"/>
    <property type="project" value="UniProtKB-KW"/>
</dbReference>
<dbReference type="CDD" id="cd11008">
    <property type="entry name" value="M35_deuterolysin_like"/>
    <property type="match status" value="1"/>
</dbReference>
<dbReference type="Gene3D" id="2.60.40.2970">
    <property type="match status" value="1"/>
</dbReference>
<dbReference type="Gene3D" id="3.40.390.10">
    <property type="entry name" value="Collagenase (Catalytic Domain)"/>
    <property type="match status" value="1"/>
</dbReference>
<dbReference type="InterPro" id="IPR050414">
    <property type="entry name" value="Fungal_M35_metalloproteases"/>
</dbReference>
<dbReference type="InterPro" id="IPR029463">
    <property type="entry name" value="Lys_MEP"/>
</dbReference>
<dbReference type="InterPro" id="IPR024079">
    <property type="entry name" value="MetalloPept_cat_dom_sf"/>
</dbReference>
<dbReference type="InterPro" id="IPR001384">
    <property type="entry name" value="Peptidase_M35"/>
</dbReference>
<dbReference type="PANTHER" id="PTHR37016">
    <property type="match status" value="1"/>
</dbReference>
<dbReference type="PANTHER" id="PTHR37016:SF7">
    <property type="entry name" value="NEUTRAL PROTEASE 2"/>
    <property type="match status" value="1"/>
</dbReference>
<dbReference type="Pfam" id="PF02102">
    <property type="entry name" value="Peptidase_M35"/>
    <property type="match status" value="1"/>
</dbReference>
<dbReference type="PRINTS" id="PR00768">
    <property type="entry name" value="DEUTEROLYSIN"/>
</dbReference>
<dbReference type="SMART" id="SM01351">
    <property type="entry name" value="Aspzincin_M35"/>
    <property type="match status" value="1"/>
</dbReference>
<dbReference type="SUPFAM" id="SSF55486">
    <property type="entry name" value="Metalloproteases ('zincins'), catalytic domain"/>
    <property type="match status" value="1"/>
</dbReference>
<dbReference type="PROSITE" id="PS00142">
    <property type="entry name" value="ZINC_PROTEASE"/>
    <property type="match status" value="1"/>
</dbReference>